<accession>A2AM05</accession>
<accession>A0PJC6</accession>
<accession>Q3TNP8</accession>
<accession>Q5EBN8</accession>
<accession>Q8C748</accession>
<accession>Q8C9U3</accession>
<accession>Q8CD25</accession>
<accession>Q8CE32</accession>
<accession>Q8R2F0</accession>
<accession>Q8R2P3</accession>
<sequence>MAARSPSSSPPPPPVRRSSRRSLRVGRGAEVHAVRSEASGLAGAAREVVADKSDLLWRGEEGSGGRRGSGRAGAAVAPVASAPAGSWWPEGLSSEEAKATRSQLLEEELSSLKEELALCQADKEFVWSLWRRLQATNPDLTQTVSLVVEREKQKSEAKDRKVLEILQVKDSKIQELEQTESVLKQELHDLVKLKTLVDEENAFLRKELCDLQKKFKDKSQEVKDAKECVQSKEEQNRLVIKNLEEENERLRTRCTDLLNDLEKLRNQEAHWRKEKHSVDTRVKVLEENLIEAKKEIESAQTKYNVVSQQLNNKQAELLQKDMDITLIRKELQELQNVYKQNSAHTAQQADLIQQLQALNMDTQKVLRNQEDVHTAESMSYQKLYNELHMCFETTKSNEVMLRQSVVNLQGQLFQKEQENVKLKEKLEESQGTAPSLSPHDSDSSHSGKAPLSTLETLMISQKSEIEYLQKKLKVANEKLMANRSCDQDFSEKGTEGKHKEPPVKRSRSLSPKSSFMGSEELRKLKKAERKIENLEKTLQLKSQENDELRDAHEKRKERLQMLHTNYRAVKEQLKQWEEDSGMAESRQMKRAEPHQLRQEDSDAVWNELAYFKRENQELMVQKMTLQDELDELKMHMSIDKTTIQELNRCMAEKREEQLFRQHEDAEVKKSTPEKNEKAISEETLQKVIELENRLKSFEKNSRKLKEESKRLKKENDFLKSHLKHYQEDSEAREKELEQLLRVSKDVEHDKSELQTKITALETEVTTLRRQVTEAKALRGKDEEVVCPEERAHRPTDKAKSEMATTDVRARRCDCKTATTKVKFKAAKRKCSVGRHHTVLNHSIKVMSHVENLSKDGWEDVSEGSSDSETQTFQNLGTIIVETSQNISPIEDGRNQKEIDQTEGSCAQQRAMQTYSCEDIKAPQSISHNKNTKKMTFQKKSGSLQKSLHSALPARVNREKCKNLPAQKSSSSTISLRERIVSLQQQNSLLQNARRAAEASAKEYKEANEKLLHQQQVSDHRFQTSRQTIKKLTLDLAELRKEKEDLLKKVESSSDIMSLAEEVSRIMAPQIKVTTLGPSRSMDLEMKQLQCKLKNATNELTKQSSNVKSLRMELLAKDDHIKEMHERTSRMERDITMKRHLIEDLKFRQKVNSESNESFNEMLETLEKKVKSLTEECSNKKVSVDSLKQRLNVAVKEKSQYEQMYQKTKEELEKKDLKMSVLISKLNDTETAMAQIETAASEQLQGLALQSEQVLEGAQKKLLSANEKIEEFTVFVKALVNELQSDVHGTRHQIRELKKMQKSRHACKTSTHKAQTLAASILNISRSDLEEILDTEDELEIEKTKIDIENDKEWMLYIQKLLEGQLPFASYLLEAVLEKIKENKKLTEGYFTVMKDTK</sequence>
<dbReference type="EMBL" id="AK029118">
    <property type="protein sequence ID" value="BAC26307.1"/>
    <property type="status" value="ALT_INIT"/>
    <property type="molecule type" value="mRNA"/>
</dbReference>
<dbReference type="EMBL" id="AK031604">
    <property type="protein sequence ID" value="BAC27472.1"/>
    <property type="molecule type" value="mRNA"/>
</dbReference>
<dbReference type="EMBL" id="AK040554">
    <property type="protein sequence ID" value="BAC30624.1"/>
    <property type="molecule type" value="mRNA"/>
</dbReference>
<dbReference type="EMBL" id="AK052558">
    <property type="protein sequence ID" value="BAC35037.2"/>
    <property type="molecule type" value="mRNA"/>
</dbReference>
<dbReference type="EMBL" id="AK165111">
    <property type="protein sequence ID" value="BAE38040.1"/>
    <property type="molecule type" value="mRNA"/>
</dbReference>
<dbReference type="EMBL" id="AL805906">
    <property type="protein sequence ID" value="CAM13729.1"/>
    <property type="molecule type" value="Genomic_DNA"/>
</dbReference>
<dbReference type="EMBL" id="AL806524">
    <property type="protein sequence ID" value="CAM13729.1"/>
    <property type="status" value="JOINED"/>
    <property type="molecule type" value="Genomic_DNA"/>
</dbReference>
<dbReference type="EMBL" id="BX470174">
    <property type="protein sequence ID" value="CAM13729.1"/>
    <property type="status" value="JOINED"/>
    <property type="molecule type" value="Genomic_DNA"/>
</dbReference>
<dbReference type="EMBL" id="AL805906">
    <property type="protein sequence ID" value="CAM13730.1"/>
    <property type="molecule type" value="Genomic_DNA"/>
</dbReference>
<dbReference type="EMBL" id="BX470174">
    <property type="protein sequence ID" value="CAM13730.1"/>
    <property type="status" value="JOINED"/>
    <property type="molecule type" value="Genomic_DNA"/>
</dbReference>
<dbReference type="EMBL" id="AL806524">
    <property type="protein sequence ID" value="CAM15708.1"/>
    <property type="molecule type" value="Genomic_DNA"/>
</dbReference>
<dbReference type="EMBL" id="AL806524">
    <property type="protein sequence ID" value="CAM15709.1"/>
    <property type="molecule type" value="Genomic_DNA"/>
</dbReference>
<dbReference type="EMBL" id="AL805906">
    <property type="protein sequence ID" value="CAM15709.1"/>
    <property type="status" value="JOINED"/>
    <property type="molecule type" value="Genomic_DNA"/>
</dbReference>
<dbReference type="EMBL" id="BX470174">
    <property type="protein sequence ID" value="CAM15709.1"/>
    <property type="status" value="JOINED"/>
    <property type="molecule type" value="Genomic_DNA"/>
</dbReference>
<dbReference type="EMBL" id="BX470174">
    <property type="protein sequence ID" value="CAM21915.1"/>
    <property type="molecule type" value="Genomic_DNA"/>
</dbReference>
<dbReference type="EMBL" id="AL805906">
    <property type="protein sequence ID" value="CAM21915.1"/>
    <property type="status" value="JOINED"/>
    <property type="molecule type" value="Genomic_DNA"/>
</dbReference>
<dbReference type="EMBL" id="AL806524">
    <property type="protein sequence ID" value="CAM21915.1"/>
    <property type="status" value="JOINED"/>
    <property type="molecule type" value="Genomic_DNA"/>
</dbReference>
<dbReference type="EMBL" id="BX470174">
    <property type="protein sequence ID" value="CAM21916.1"/>
    <property type="molecule type" value="Genomic_DNA"/>
</dbReference>
<dbReference type="EMBL" id="AL805906">
    <property type="protein sequence ID" value="CAM21916.1"/>
    <property type="status" value="JOINED"/>
    <property type="molecule type" value="Genomic_DNA"/>
</dbReference>
<dbReference type="EMBL" id="BC024869">
    <property type="protein sequence ID" value="AAH24869.1"/>
    <property type="status" value="ALT_SEQ"/>
    <property type="molecule type" value="mRNA"/>
</dbReference>
<dbReference type="EMBL" id="BC027370">
    <property type="protein sequence ID" value="AAH27370.1"/>
    <property type="molecule type" value="mRNA"/>
</dbReference>
<dbReference type="EMBL" id="BC089374">
    <property type="protein sequence ID" value="AAH89374.1"/>
    <property type="molecule type" value="mRNA"/>
</dbReference>
<dbReference type="EMBL" id="BC125622">
    <property type="protein sequence ID" value="AAI25623.1"/>
    <property type="molecule type" value="mRNA"/>
</dbReference>
<dbReference type="EMBL" id="BC125624">
    <property type="protein sequence ID" value="AAI25625.1"/>
    <property type="molecule type" value="mRNA"/>
</dbReference>
<dbReference type="EMBL" id="AF483477">
    <property type="protein sequence ID" value="AAL89759.1"/>
    <property type="molecule type" value="mRNA"/>
</dbReference>
<dbReference type="CCDS" id="CCDS18302.1">
    <molecule id="A2AM05-2"/>
</dbReference>
<dbReference type="CCDS" id="CCDS51216.1">
    <molecule id="A2AM05-4"/>
</dbReference>
<dbReference type="RefSeq" id="NP_001392359.1">
    <molecule id="A2AM05-1"/>
    <property type="nucleotide sequence ID" value="NM_001405430.1"/>
</dbReference>
<dbReference type="RefSeq" id="NP_780484.2">
    <molecule id="A2AM05-4"/>
    <property type="nucleotide sequence ID" value="NM_175275.4"/>
</dbReference>
<dbReference type="RefSeq" id="NP_796359.1">
    <molecule id="A2AM05-2"/>
    <property type="nucleotide sequence ID" value="NM_177385.5"/>
</dbReference>
<dbReference type="RefSeq" id="XP_006538089.1">
    <property type="nucleotide sequence ID" value="XM_006538026.3"/>
</dbReference>
<dbReference type="SMR" id="A2AM05"/>
<dbReference type="BioGRID" id="237205">
    <property type="interactions" value="1"/>
</dbReference>
<dbReference type="FunCoup" id="A2AM05">
    <property type="interactions" value="1629"/>
</dbReference>
<dbReference type="STRING" id="10090.ENSMUSP00000130491"/>
<dbReference type="iPTMnet" id="A2AM05"/>
<dbReference type="PhosphoSitePlus" id="A2AM05"/>
<dbReference type="jPOST" id="A2AM05"/>
<dbReference type="PaxDb" id="10090-ENSMUSP00000099883"/>
<dbReference type="Pumba" id="A2AM05"/>
<dbReference type="Antibodypedia" id="24606">
    <property type="antibodies" value="87 antibodies from 15 providers"/>
</dbReference>
<dbReference type="Ensembl" id="ENSMUST00000047023.13">
    <molecule id="A2AM05-1"/>
    <property type="protein sequence ID" value="ENSMUSP00000044138.7"/>
    <property type="gene ID" value="ENSMUSG00000038070.16"/>
</dbReference>
<dbReference type="Ensembl" id="ENSMUST00000102819.10">
    <molecule id="A2AM05-2"/>
    <property type="protein sequence ID" value="ENSMUSP00000099883.4"/>
    <property type="gene ID" value="ENSMUSG00000038070.16"/>
</dbReference>
<dbReference type="Ensembl" id="ENSMUST00000107190.2">
    <molecule id="A2AM05-3"/>
    <property type="protein sequence ID" value="ENSMUSP00000102808.2"/>
    <property type="gene ID" value="ENSMUSG00000038070.16"/>
</dbReference>
<dbReference type="Ensembl" id="ENSMUST00000169371.9">
    <molecule id="A2AM05-4"/>
    <property type="protein sequence ID" value="ENSMUSP00000130491.3"/>
    <property type="gene ID" value="ENSMUSG00000038070.16"/>
</dbReference>
<dbReference type="GeneID" id="338349"/>
<dbReference type="KEGG" id="mmu:338349"/>
<dbReference type="UCSC" id="uc008tlk.2">
    <molecule id="A2AM05-2"/>
    <property type="organism name" value="mouse"/>
</dbReference>
<dbReference type="UCSC" id="uc008tll.2">
    <molecule id="A2AM05-4"/>
    <property type="organism name" value="mouse"/>
</dbReference>
<dbReference type="UCSC" id="uc008tln.2">
    <molecule id="A2AM05-3"/>
    <property type="organism name" value="mouse"/>
</dbReference>
<dbReference type="AGR" id="MGI:2443104"/>
<dbReference type="CTD" id="54875"/>
<dbReference type="MGI" id="MGI:2443104">
    <property type="gene designation" value="Cntln"/>
</dbReference>
<dbReference type="VEuPathDB" id="HostDB:ENSMUSG00000038070"/>
<dbReference type="eggNOG" id="ENOG502QRVC">
    <property type="taxonomic scope" value="Eukaryota"/>
</dbReference>
<dbReference type="GeneTree" id="ENSGT00440000034932"/>
<dbReference type="HOGENOM" id="CLU_006488_1_0_1"/>
<dbReference type="InParanoid" id="A2AM05"/>
<dbReference type="OMA" id="EYFTIMK"/>
<dbReference type="OrthoDB" id="10011458at2759"/>
<dbReference type="PhylomeDB" id="A2AM05"/>
<dbReference type="BioGRID-ORCS" id="338349">
    <property type="hits" value="2 hits in 79 CRISPR screens"/>
</dbReference>
<dbReference type="CD-CODE" id="01CA17F3">
    <property type="entry name" value="Centrosome"/>
</dbReference>
<dbReference type="ChiTaRS" id="Cntln">
    <property type="organism name" value="mouse"/>
</dbReference>
<dbReference type="PRO" id="PR:A2AM05"/>
<dbReference type="Proteomes" id="UP000000589">
    <property type="component" value="Chromosome 4"/>
</dbReference>
<dbReference type="RNAct" id="A2AM05">
    <property type="molecule type" value="protein"/>
</dbReference>
<dbReference type="Bgee" id="ENSMUSG00000038070">
    <property type="expression patterns" value="Expressed in saccule of membranous labyrinth and 211 other cell types or tissues"/>
</dbReference>
<dbReference type="GO" id="GO:0005814">
    <property type="term" value="C:centriole"/>
    <property type="evidence" value="ECO:0007669"/>
    <property type="project" value="UniProtKB-SubCell"/>
</dbReference>
<dbReference type="GO" id="GO:0005813">
    <property type="term" value="C:centrosome"/>
    <property type="evidence" value="ECO:0007669"/>
    <property type="project" value="Ensembl"/>
</dbReference>
<dbReference type="GO" id="GO:0005829">
    <property type="term" value="C:cytosol"/>
    <property type="evidence" value="ECO:0007669"/>
    <property type="project" value="Ensembl"/>
</dbReference>
<dbReference type="GO" id="GO:0005654">
    <property type="term" value="C:nucleoplasm"/>
    <property type="evidence" value="ECO:0007669"/>
    <property type="project" value="Ensembl"/>
</dbReference>
<dbReference type="GO" id="GO:0120212">
    <property type="term" value="C:sperm head-tail coupling apparatus"/>
    <property type="evidence" value="ECO:0000314"/>
    <property type="project" value="MGI"/>
</dbReference>
<dbReference type="GO" id="GO:0019904">
    <property type="term" value="F:protein domain specific binding"/>
    <property type="evidence" value="ECO:0007669"/>
    <property type="project" value="Ensembl"/>
</dbReference>
<dbReference type="GO" id="GO:0019901">
    <property type="term" value="F:protein kinase binding"/>
    <property type="evidence" value="ECO:0007669"/>
    <property type="project" value="Ensembl"/>
</dbReference>
<dbReference type="GO" id="GO:0030674">
    <property type="term" value="F:protein-macromolecule adaptor activity"/>
    <property type="evidence" value="ECO:0007669"/>
    <property type="project" value="Ensembl"/>
</dbReference>
<dbReference type="GO" id="GO:0010457">
    <property type="term" value="P:centriole-centriole cohesion"/>
    <property type="evidence" value="ECO:0007669"/>
    <property type="project" value="Ensembl"/>
</dbReference>
<dbReference type="GO" id="GO:0008104">
    <property type="term" value="P:protein localization"/>
    <property type="evidence" value="ECO:0000315"/>
    <property type="project" value="MGI"/>
</dbReference>
<dbReference type="GO" id="GO:0033365">
    <property type="term" value="P:protein localization to organelle"/>
    <property type="evidence" value="ECO:0007669"/>
    <property type="project" value="Ensembl"/>
</dbReference>
<dbReference type="GO" id="GO:0065003">
    <property type="term" value="P:protein-containing complex assembly"/>
    <property type="evidence" value="ECO:0000315"/>
    <property type="project" value="MGI"/>
</dbReference>
<dbReference type="GO" id="GO:0032880">
    <property type="term" value="P:regulation of protein localization"/>
    <property type="evidence" value="ECO:0000315"/>
    <property type="project" value="MGI"/>
</dbReference>
<dbReference type="GO" id="GO:0007338">
    <property type="term" value="P:single fertilization"/>
    <property type="evidence" value="ECO:0000315"/>
    <property type="project" value="MGI"/>
</dbReference>
<dbReference type="GO" id="GO:0007283">
    <property type="term" value="P:spermatogenesis"/>
    <property type="evidence" value="ECO:0000315"/>
    <property type="project" value="MGI"/>
</dbReference>
<dbReference type="InterPro" id="IPR038810">
    <property type="entry name" value="CNTLN"/>
</dbReference>
<dbReference type="PANTHER" id="PTHR18957">
    <property type="entry name" value="CENTLEIN"/>
    <property type="match status" value="1"/>
</dbReference>
<dbReference type="PANTHER" id="PTHR18957:SF0">
    <property type="entry name" value="CENTLEIN"/>
    <property type="match status" value="1"/>
</dbReference>
<evidence type="ECO:0000250" key="1">
    <source>
        <dbReference type="UniProtKB" id="A9ZSY0"/>
    </source>
</evidence>
<evidence type="ECO:0000250" key="2">
    <source>
        <dbReference type="UniProtKB" id="Q9NXG0"/>
    </source>
</evidence>
<evidence type="ECO:0000255" key="3"/>
<evidence type="ECO:0000256" key="4">
    <source>
        <dbReference type="SAM" id="MobiDB-lite"/>
    </source>
</evidence>
<evidence type="ECO:0000269" key="5">
    <source>
    </source>
</evidence>
<evidence type="ECO:0000269" key="6">
    <source>
    </source>
</evidence>
<evidence type="ECO:0000269" key="7">
    <source ref="4"/>
</evidence>
<evidence type="ECO:0000303" key="8">
    <source>
    </source>
</evidence>
<evidence type="ECO:0000303" key="9">
    <source>
    </source>
</evidence>
<evidence type="ECO:0000305" key="10"/>
<evidence type="ECO:0000312" key="11">
    <source>
        <dbReference type="EMBL" id="AAH24869.1"/>
    </source>
</evidence>
<evidence type="ECO:0000312" key="12">
    <source>
        <dbReference type="EMBL" id="AAH89374.1"/>
    </source>
</evidence>
<evidence type="ECO:0000312" key="13">
    <source>
        <dbReference type="EMBL" id="AAI25625.1"/>
    </source>
</evidence>
<evidence type="ECO:0000312" key="14">
    <source>
        <dbReference type="EMBL" id="BAC26307.1"/>
    </source>
</evidence>
<evidence type="ECO:0000312" key="15">
    <source>
        <dbReference type="EMBL" id="BAC27472.1"/>
    </source>
</evidence>
<evidence type="ECO:0000312" key="16">
    <source>
        <dbReference type="EMBL" id="BAC30624.1"/>
    </source>
</evidence>
<evidence type="ECO:0000312" key="17">
    <source>
        <dbReference type="EMBL" id="BAC35037.2"/>
    </source>
</evidence>
<evidence type="ECO:0000312" key="18">
    <source>
        <dbReference type="EMBL" id="BAE38040.1"/>
    </source>
</evidence>
<evidence type="ECO:0000312" key="19">
    <source>
        <dbReference type="EMBL" id="CAM15709.1"/>
    </source>
</evidence>
<evidence type="ECO:0007744" key="20">
    <source>
    </source>
</evidence>
<evidence type="ECO:0007744" key="21">
    <source>
    </source>
</evidence>
<name>CNTLN_MOUSE</name>
<organism>
    <name type="scientific">Mus musculus</name>
    <name type="common">Mouse</name>
    <dbReference type="NCBI Taxonomy" id="10090"/>
    <lineage>
        <taxon>Eukaryota</taxon>
        <taxon>Metazoa</taxon>
        <taxon>Chordata</taxon>
        <taxon>Craniata</taxon>
        <taxon>Vertebrata</taxon>
        <taxon>Euteleostomi</taxon>
        <taxon>Mammalia</taxon>
        <taxon>Eutheria</taxon>
        <taxon>Euarchontoglires</taxon>
        <taxon>Glires</taxon>
        <taxon>Rodentia</taxon>
        <taxon>Myomorpha</taxon>
        <taxon>Muroidea</taxon>
        <taxon>Muridae</taxon>
        <taxon>Murinae</taxon>
        <taxon>Mus</taxon>
        <taxon>Mus</taxon>
    </lineage>
</organism>
<comment type="function">
    <text evidence="2">Required for centrosome cohesion and recruitment of CEP68 to centrosomes.</text>
</comment>
<comment type="subunit">
    <text evidence="2">Interacts with CEP250 and CEP68. Interacts with NEK2; the interaction leads to phosphorylation of CNTLN.</text>
</comment>
<comment type="subcellular location">
    <subcellularLocation>
        <location evidence="1">Cytoplasm</location>
        <location evidence="1">Cytoskeleton</location>
        <location evidence="1">Microtubule organizing center</location>
        <location evidence="1">Centrosome</location>
        <location evidence="1">Centriole</location>
    </subcellularLocation>
    <text evidence="1 2">Colocalizes with gamma-tubulin during interphase and mitosis. Appears to associate with the mother centriole during G1 phase and with daughter centrioles towards G1/S phase. Localizes to the proximal ends of the centrioles. Levels are high at interphase centrosomes but are reduced on mitotic spindle poles.</text>
</comment>
<comment type="alternative products">
    <event type="alternative splicing"/>
    <isoform>
        <id>A2AM05-1</id>
        <name evidence="5 6 7">1</name>
        <sequence type="displayed"/>
    </isoform>
    <isoform>
        <id>A2AM05-2</id>
        <name evidence="5 6">2</name>
        <sequence type="described" ref="VSP_052786 VSP_052787"/>
    </isoform>
    <isoform>
        <id>A2AM05-3</id>
        <name evidence="5">3</name>
        <sequence type="described" ref="VSP_052785"/>
    </isoform>
    <isoform>
        <id>A2AM05-4</id>
        <name>4</name>
        <sequence type="described" ref="VSP_032866"/>
    </isoform>
</comment>
<comment type="PTM">
    <text evidence="2">Phosphorylated directly or indirectly by NEK2.</text>
</comment>
<comment type="sequence caution" evidence="10">
    <conflict type="miscellaneous discrepancy">
        <sequence resource="EMBL-CDS" id="AAH24869"/>
    </conflict>
    <text>Contaminating sequence. Potential poly-A sequence.</text>
</comment>
<comment type="sequence caution" evidence="10">
    <conflict type="erroneous initiation">
        <sequence resource="EMBL-CDS" id="BAC26307"/>
    </conflict>
</comment>
<protein>
    <recommendedName>
        <fullName>Centlein</fullName>
    </recommendedName>
    <alternativeName>
        <fullName>Centrosomal protein</fullName>
    </alternativeName>
</protein>
<proteinExistence type="evidence at protein level"/>
<reference evidence="10 17" key="1">
    <citation type="journal article" date="2005" name="Science">
        <title>The transcriptional landscape of the mammalian genome.</title>
        <authorList>
            <person name="Carninci P."/>
            <person name="Kasukawa T."/>
            <person name="Katayama S."/>
            <person name="Gough J."/>
            <person name="Frith M.C."/>
            <person name="Maeda N."/>
            <person name="Oyama R."/>
            <person name="Ravasi T."/>
            <person name="Lenhard B."/>
            <person name="Wells C."/>
            <person name="Kodzius R."/>
            <person name="Shimokawa K."/>
            <person name="Bajic V.B."/>
            <person name="Brenner S.E."/>
            <person name="Batalov S."/>
            <person name="Forrest A.R."/>
            <person name="Zavolan M."/>
            <person name="Davis M.J."/>
            <person name="Wilming L.G."/>
            <person name="Aidinis V."/>
            <person name="Allen J.E."/>
            <person name="Ambesi-Impiombato A."/>
            <person name="Apweiler R."/>
            <person name="Aturaliya R.N."/>
            <person name="Bailey T.L."/>
            <person name="Bansal M."/>
            <person name="Baxter L."/>
            <person name="Beisel K.W."/>
            <person name="Bersano T."/>
            <person name="Bono H."/>
            <person name="Chalk A.M."/>
            <person name="Chiu K.P."/>
            <person name="Choudhary V."/>
            <person name="Christoffels A."/>
            <person name="Clutterbuck D.R."/>
            <person name="Crowe M.L."/>
            <person name="Dalla E."/>
            <person name="Dalrymple B.P."/>
            <person name="de Bono B."/>
            <person name="Della Gatta G."/>
            <person name="di Bernardo D."/>
            <person name="Down T."/>
            <person name="Engstrom P."/>
            <person name="Fagiolini M."/>
            <person name="Faulkner G."/>
            <person name="Fletcher C.F."/>
            <person name="Fukushima T."/>
            <person name="Furuno M."/>
            <person name="Futaki S."/>
            <person name="Gariboldi M."/>
            <person name="Georgii-Hemming P."/>
            <person name="Gingeras T.R."/>
            <person name="Gojobori T."/>
            <person name="Green R.E."/>
            <person name="Gustincich S."/>
            <person name="Harbers M."/>
            <person name="Hayashi Y."/>
            <person name="Hensch T.K."/>
            <person name="Hirokawa N."/>
            <person name="Hill D."/>
            <person name="Huminiecki L."/>
            <person name="Iacono M."/>
            <person name="Ikeo K."/>
            <person name="Iwama A."/>
            <person name="Ishikawa T."/>
            <person name="Jakt M."/>
            <person name="Kanapin A."/>
            <person name="Katoh M."/>
            <person name="Kawasawa Y."/>
            <person name="Kelso J."/>
            <person name="Kitamura H."/>
            <person name="Kitano H."/>
            <person name="Kollias G."/>
            <person name="Krishnan S.P."/>
            <person name="Kruger A."/>
            <person name="Kummerfeld S.K."/>
            <person name="Kurochkin I.V."/>
            <person name="Lareau L.F."/>
            <person name="Lazarevic D."/>
            <person name="Lipovich L."/>
            <person name="Liu J."/>
            <person name="Liuni S."/>
            <person name="McWilliam S."/>
            <person name="Madan Babu M."/>
            <person name="Madera M."/>
            <person name="Marchionni L."/>
            <person name="Matsuda H."/>
            <person name="Matsuzawa S."/>
            <person name="Miki H."/>
            <person name="Mignone F."/>
            <person name="Miyake S."/>
            <person name="Morris K."/>
            <person name="Mottagui-Tabar S."/>
            <person name="Mulder N."/>
            <person name="Nakano N."/>
            <person name="Nakauchi H."/>
            <person name="Ng P."/>
            <person name="Nilsson R."/>
            <person name="Nishiguchi S."/>
            <person name="Nishikawa S."/>
            <person name="Nori F."/>
            <person name="Ohara O."/>
            <person name="Okazaki Y."/>
            <person name="Orlando V."/>
            <person name="Pang K.C."/>
            <person name="Pavan W.J."/>
            <person name="Pavesi G."/>
            <person name="Pesole G."/>
            <person name="Petrovsky N."/>
            <person name="Piazza S."/>
            <person name="Reed J."/>
            <person name="Reid J.F."/>
            <person name="Ring B.Z."/>
            <person name="Ringwald M."/>
            <person name="Rost B."/>
            <person name="Ruan Y."/>
            <person name="Salzberg S.L."/>
            <person name="Sandelin A."/>
            <person name="Schneider C."/>
            <person name="Schoenbach C."/>
            <person name="Sekiguchi K."/>
            <person name="Semple C.A."/>
            <person name="Seno S."/>
            <person name="Sessa L."/>
            <person name="Sheng Y."/>
            <person name="Shibata Y."/>
            <person name="Shimada H."/>
            <person name="Shimada K."/>
            <person name="Silva D."/>
            <person name="Sinclair B."/>
            <person name="Sperling S."/>
            <person name="Stupka E."/>
            <person name="Sugiura K."/>
            <person name="Sultana R."/>
            <person name="Takenaka Y."/>
            <person name="Taki K."/>
            <person name="Tammoja K."/>
            <person name="Tan S.L."/>
            <person name="Tang S."/>
            <person name="Taylor M.S."/>
            <person name="Tegner J."/>
            <person name="Teichmann S.A."/>
            <person name="Ueda H.R."/>
            <person name="van Nimwegen E."/>
            <person name="Verardo R."/>
            <person name="Wei C.L."/>
            <person name="Yagi K."/>
            <person name="Yamanishi H."/>
            <person name="Zabarovsky E."/>
            <person name="Zhu S."/>
            <person name="Zimmer A."/>
            <person name="Hide W."/>
            <person name="Bult C."/>
            <person name="Grimmond S.M."/>
            <person name="Teasdale R.D."/>
            <person name="Liu E.T."/>
            <person name="Brusic V."/>
            <person name="Quackenbush J."/>
            <person name="Wahlestedt C."/>
            <person name="Mattick J.S."/>
            <person name="Hume D.A."/>
            <person name="Kai C."/>
            <person name="Sasaki D."/>
            <person name="Tomaru Y."/>
            <person name="Fukuda S."/>
            <person name="Kanamori-Katayama M."/>
            <person name="Suzuki M."/>
            <person name="Aoki J."/>
            <person name="Arakawa T."/>
            <person name="Iida J."/>
            <person name="Imamura K."/>
            <person name="Itoh M."/>
            <person name="Kato T."/>
            <person name="Kawaji H."/>
            <person name="Kawagashira N."/>
            <person name="Kawashima T."/>
            <person name="Kojima M."/>
            <person name="Kondo S."/>
            <person name="Konno H."/>
            <person name="Nakano K."/>
            <person name="Ninomiya N."/>
            <person name="Nishio T."/>
            <person name="Okada M."/>
            <person name="Plessy C."/>
            <person name="Shibata K."/>
            <person name="Shiraki T."/>
            <person name="Suzuki S."/>
            <person name="Tagami M."/>
            <person name="Waki K."/>
            <person name="Watahiki A."/>
            <person name="Okamura-Oho Y."/>
            <person name="Suzuki H."/>
            <person name="Kawai J."/>
            <person name="Hayashizaki Y."/>
        </authorList>
    </citation>
    <scope>NUCLEOTIDE SEQUENCE [LARGE SCALE MRNA] (ISOFORM 2)</scope>
    <scope>NUCLEOTIDE SEQUENCE [LARGE SCALE MRNA] OF 1-701 AND 774-1397 (ISOFORM 1)</scope>
    <source>
        <strain evidence="17">C57BL/6J</strain>
        <tissue evidence="17">Embryonic stomach</tissue>
        <tissue evidence="15">Embryonic testis</tissue>
        <tissue evidence="14">Neonatal skin</tissue>
        <tissue evidence="18">Ovary</tissue>
        <tissue evidence="16">Thymus</tissue>
    </source>
</reference>
<reference key="2">
    <citation type="journal article" date="2009" name="PLoS Biol.">
        <title>Lineage-specific biology revealed by a finished genome assembly of the mouse.</title>
        <authorList>
            <person name="Church D.M."/>
            <person name="Goodstadt L."/>
            <person name="Hillier L.W."/>
            <person name="Zody M.C."/>
            <person name="Goldstein S."/>
            <person name="She X."/>
            <person name="Bult C.J."/>
            <person name="Agarwala R."/>
            <person name="Cherry J.L."/>
            <person name="DiCuccio M."/>
            <person name="Hlavina W."/>
            <person name="Kapustin Y."/>
            <person name="Meric P."/>
            <person name="Maglott D."/>
            <person name="Birtle Z."/>
            <person name="Marques A.C."/>
            <person name="Graves T."/>
            <person name="Zhou S."/>
            <person name="Teague B."/>
            <person name="Potamousis K."/>
            <person name="Churas C."/>
            <person name="Place M."/>
            <person name="Herschleb J."/>
            <person name="Runnheim R."/>
            <person name="Forrest D."/>
            <person name="Amos-Landgraf J."/>
            <person name="Schwartz D.C."/>
            <person name="Cheng Z."/>
            <person name="Lindblad-Toh K."/>
            <person name="Eichler E.E."/>
            <person name="Ponting C.P."/>
        </authorList>
    </citation>
    <scope>NUCLEOTIDE SEQUENCE [LARGE SCALE GENOMIC DNA]</scope>
    <source>
        <strain>C57BL/6J</strain>
    </source>
</reference>
<reference evidence="10 12" key="3">
    <citation type="journal article" date="2004" name="Genome Res.">
        <title>The status, quality, and expansion of the NIH full-length cDNA project: the Mammalian Gene Collection (MGC).</title>
        <authorList>
            <consortium name="The MGC Project Team"/>
        </authorList>
    </citation>
    <scope>NUCLEOTIDE SEQUENCE [LARGE SCALE MRNA] (ISOFORMS 2 AND 3)</scope>
    <scope>NUCLEOTIDE SEQUENCE [LARGE SCALE MRNA] OF 273-705 (ISOFORM 1)</scope>
    <scope>NUCLEOTIDE SEQUENCE [LARGE SCALE MRNA] OF 715-1397 (ISOFORM 4)</scope>
    <source>
        <strain evidence="12">C57BL/6J</strain>
        <strain evidence="11">FVB/N</strain>
        <tissue evidence="13">Brain</tissue>
        <tissue evidence="12">Eye</tissue>
        <tissue evidence="11">Mammary tumor</tissue>
    </source>
</reference>
<reference evidence="10 19" key="4">
    <citation type="submission" date="2002-02" db="EMBL/GenBank/DDBJ databases">
        <title>A partial cDNA encoding the mouse ortholog of hypothetical human protein FLJ20276.</title>
        <authorList>
            <person name="Beale E.G."/>
            <person name="Boston W.L."/>
            <person name="Ott K."/>
            <person name="Yasmin R."/>
            <person name="Desvergne B."/>
            <person name="Wahli W."/>
        </authorList>
    </citation>
    <scope>NUCLEOTIDE SEQUENCE [MRNA] OF 996-1376 (ISOFORM 1)</scope>
</reference>
<reference key="5">
    <citation type="journal article" date="2009" name="Mol. Cell. Proteomics">
        <title>Large scale localization of protein phosphorylation by use of electron capture dissociation mass spectrometry.</title>
        <authorList>
            <person name="Sweet S.M."/>
            <person name="Bailey C.M."/>
            <person name="Cunningham D.L."/>
            <person name="Heath J.K."/>
            <person name="Cooper H.J."/>
        </authorList>
    </citation>
    <scope>ACETYLATION [LARGE SCALE ANALYSIS] AT ALA-2</scope>
    <scope>PHOSPHORYLATION [LARGE SCALE ANALYSIS] AT SER-5 AND SER-9</scope>
    <scope>CLEAVAGE OF INITIATOR METHIONINE [LARGE SCALE ANALYSIS]</scope>
    <scope>IDENTIFICATION BY MASS SPECTROMETRY [LARGE SCALE ANALYSIS]</scope>
    <source>
        <tissue>Embryonic fibroblast</tissue>
    </source>
</reference>
<reference key="6">
    <citation type="journal article" date="2010" name="Cell">
        <title>A tissue-specific atlas of mouse protein phosphorylation and expression.</title>
        <authorList>
            <person name="Huttlin E.L."/>
            <person name="Jedrychowski M.P."/>
            <person name="Elias J.E."/>
            <person name="Goswami T."/>
            <person name="Rad R."/>
            <person name="Beausoleil S.A."/>
            <person name="Villen J."/>
            <person name="Haas W."/>
            <person name="Sowa M.E."/>
            <person name="Gygi S.P."/>
        </authorList>
    </citation>
    <scope>PHOSPHORYLATION [LARGE SCALE ANALYSIS] AT SER-5; SER-9; SER-1219 AND THR-1334</scope>
    <scope>IDENTIFICATION BY MASS SPECTROMETRY [LARGE SCALE ANALYSIS]</scope>
    <source>
        <tissue>Kidney</tissue>
        <tissue>Lung</tissue>
        <tissue>Spleen</tissue>
        <tissue>Testis</tissue>
    </source>
</reference>
<keyword id="KW-0007">Acetylation</keyword>
<keyword id="KW-0025">Alternative splicing</keyword>
<keyword id="KW-0175">Coiled coil</keyword>
<keyword id="KW-0963">Cytoplasm</keyword>
<keyword id="KW-0206">Cytoskeleton</keyword>
<keyword id="KW-0597">Phosphoprotein</keyword>
<keyword id="KW-1185">Reference proteome</keyword>
<gene>
    <name evidence="2" type="primary">Cntln</name>
</gene>
<feature type="initiator methionine" description="Removed" evidence="20">
    <location>
        <position position="1"/>
    </location>
</feature>
<feature type="chain" id="PRO_0000328976" description="Centlein">
    <location>
        <begin position="2"/>
        <end position="1397"/>
    </location>
</feature>
<feature type="region of interest" description="Disordered" evidence="4">
    <location>
        <begin position="1"/>
        <end position="43"/>
    </location>
</feature>
<feature type="region of interest" description="Disordered" evidence="4">
    <location>
        <begin position="56"/>
        <end position="76"/>
    </location>
</feature>
<feature type="region of interest" description="Disordered" evidence="4">
    <location>
        <begin position="422"/>
        <end position="449"/>
    </location>
</feature>
<feature type="region of interest" description="Disordered" evidence="4">
    <location>
        <begin position="485"/>
        <end position="521"/>
    </location>
</feature>
<feature type="coiled-coil region" evidence="3">
    <location>
        <begin position="95"/>
        <end position="126"/>
    </location>
</feature>
<feature type="coiled-coil region" evidence="3">
    <location>
        <begin position="405"/>
        <end position="481"/>
    </location>
</feature>
<feature type="coiled-coil region" evidence="3">
    <location>
        <begin position="674"/>
        <end position="778"/>
    </location>
</feature>
<feature type="coiled-coil region" evidence="3">
    <location>
        <begin position="973"/>
        <end position="1114"/>
    </location>
</feature>
<feature type="coiled-coil region" evidence="3">
    <location>
        <begin position="1152"/>
        <end position="1299"/>
    </location>
</feature>
<feature type="compositionally biased region" description="Basic and acidic residues" evidence="4">
    <location>
        <begin position="485"/>
        <end position="503"/>
    </location>
</feature>
<feature type="modified residue" description="N-acetylalanine" evidence="20">
    <location>
        <position position="2"/>
    </location>
</feature>
<feature type="modified residue" description="Phosphoserine" evidence="20 21">
    <location>
        <position position="5"/>
    </location>
</feature>
<feature type="modified residue" description="Phosphoserine" evidence="20 21">
    <location>
        <position position="9"/>
    </location>
</feature>
<feature type="modified residue" description="Phosphoserine" evidence="2">
    <location>
        <position position="22"/>
    </location>
</feature>
<feature type="modified residue" description="Phosphoserine" evidence="21">
    <location>
        <position position="1219"/>
    </location>
</feature>
<feature type="modified residue" description="Phosphothreonine" evidence="21">
    <location>
        <position position="1334"/>
    </location>
</feature>
<feature type="splice variant" id="VSP_052785" description="In isoform 3." evidence="8">
    <location>
        <begin position="1"/>
        <end position="1135"/>
    </location>
</feature>
<feature type="splice variant" id="VSP_052786" description="In isoform 2." evidence="8 9">
    <original>LEENLIEAKKEIESAQTKYNVVSQQLNNKQAELL</original>
    <variation>QGGPVSMSCPGPSFLQQPNIRFSLNNKLSIQIHQ</variation>
    <location>
        <begin position="285"/>
        <end position="318"/>
    </location>
</feature>
<feature type="splice variant" id="VSP_052787" description="In isoform 2." evidence="8 9">
    <location>
        <begin position="319"/>
        <end position="1397"/>
    </location>
</feature>
<feature type="splice variant" id="VSP_032866" description="In isoform 4." evidence="8">
    <location>
        <position position="865"/>
    </location>
</feature>
<feature type="sequence conflict" description="In Ref. 1; BAC35037." evidence="10" ref="1">
    <original>S</original>
    <variation>F</variation>
    <location>
        <position position="484"/>
    </location>
</feature>
<feature type="sequence conflict" description="In Ref. 1; BAC35037." evidence="10" ref="1">
    <original>S</original>
    <variation>P</variation>
    <location>
        <position position="701"/>
    </location>
</feature>
<feature type="sequence conflict" description="In Ref. 4; AAL89759." evidence="10" ref="4">
    <original>F</original>
    <variation>L</variation>
    <location>
        <position position="1021"/>
    </location>
</feature>
<feature type="sequence conflict" description="In Ref. 4; AAL89759." evidence="10" ref="4">
    <original>M</original>
    <variation>T</variation>
    <location>
        <position position="1056"/>
    </location>
</feature>